<dbReference type="EMBL" id="CP000241">
    <property type="protein sequence ID" value="ABF84596.1"/>
    <property type="molecule type" value="Genomic_DNA"/>
</dbReference>
<dbReference type="RefSeq" id="WP_000715278.1">
    <property type="nucleotide sequence ID" value="NC_008086.1"/>
</dbReference>
<dbReference type="SMR" id="Q1CTX6"/>
<dbReference type="GeneID" id="93236900"/>
<dbReference type="KEGG" id="hpa:HPAG1_0529"/>
<dbReference type="HOGENOM" id="CLU_114306_4_0_7"/>
<dbReference type="GO" id="GO:1990904">
    <property type="term" value="C:ribonucleoprotein complex"/>
    <property type="evidence" value="ECO:0007669"/>
    <property type="project" value="UniProtKB-KW"/>
</dbReference>
<dbReference type="GO" id="GO:0005840">
    <property type="term" value="C:ribosome"/>
    <property type="evidence" value="ECO:0007669"/>
    <property type="project" value="UniProtKB-KW"/>
</dbReference>
<dbReference type="GO" id="GO:0019843">
    <property type="term" value="F:rRNA binding"/>
    <property type="evidence" value="ECO:0007669"/>
    <property type="project" value="UniProtKB-KW"/>
</dbReference>
<dbReference type="GO" id="GO:0003735">
    <property type="term" value="F:structural constituent of ribosome"/>
    <property type="evidence" value="ECO:0007669"/>
    <property type="project" value="InterPro"/>
</dbReference>
<dbReference type="GO" id="GO:0006412">
    <property type="term" value="P:translation"/>
    <property type="evidence" value="ECO:0007669"/>
    <property type="project" value="UniProtKB-UniRule"/>
</dbReference>
<dbReference type="Gene3D" id="4.10.830.30">
    <property type="entry name" value="Ribosomal protein L31"/>
    <property type="match status" value="1"/>
</dbReference>
<dbReference type="HAMAP" id="MF_00501">
    <property type="entry name" value="Ribosomal_bL31_1"/>
    <property type="match status" value="1"/>
</dbReference>
<dbReference type="InterPro" id="IPR034704">
    <property type="entry name" value="Ribosomal_bL28/bL31-like_sf"/>
</dbReference>
<dbReference type="InterPro" id="IPR002150">
    <property type="entry name" value="Ribosomal_bL31"/>
</dbReference>
<dbReference type="InterPro" id="IPR027491">
    <property type="entry name" value="Ribosomal_bL31_A"/>
</dbReference>
<dbReference type="InterPro" id="IPR042105">
    <property type="entry name" value="Ribosomal_bL31_sf"/>
</dbReference>
<dbReference type="NCBIfam" id="TIGR00105">
    <property type="entry name" value="L31"/>
    <property type="match status" value="1"/>
</dbReference>
<dbReference type="NCBIfam" id="NF000612">
    <property type="entry name" value="PRK00019.1"/>
    <property type="match status" value="1"/>
</dbReference>
<dbReference type="NCBIfam" id="NF001809">
    <property type="entry name" value="PRK00528.1"/>
    <property type="match status" value="1"/>
</dbReference>
<dbReference type="PANTHER" id="PTHR33280">
    <property type="entry name" value="50S RIBOSOMAL PROTEIN L31, CHLOROPLASTIC"/>
    <property type="match status" value="1"/>
</dbReference>
<dbReference type="PANTHER" id="PTHR33280:SF6">
    <property type="entry name" value="LARGE RIBOSOMAL SUBUNIT PROTEIN BL31A"/>
    <property type="match status" value="1"/>
</dbReference>
<dbReference type="Pfam" id="PF01197">
    <property type="entry name" value="Ribosomal_L31"/>
    <property type="match status" value="1"/>
</dbReference>
<dbReference type="PRINTS" id="PR01249">
    <property type="entry name" value="RIBOSOMALL31"/>
</dbReference>
<dbReference type="SUPFAM" id="SSF143800">
    <property type="entry name" value="L28p-like"/>
    <property type="match status" value="1"/>
</dbReference>
<dbReference type="PROSITE" id="PS01143">
    <property type="entry name" value="RIBOSOMAL_L31"/>
    <property type="match status" value="1"/>
</dbReference>
<name>RL31_HELPH</name>
<evidence type="ECO:0000255" key="1">
    <source>
        <dbReference type="HAMAP-Rule" id="MF_00501"/>
    </source>
</evidence>
<evidence type="ECO:0000305" key="2"/>
<reference key="1">
    <citation type="journal article" date="2006" name="Proc. Natl. Acad. Sci. U.S.A.">
        <title>The complete genome sequence of a chronic atrophic gastritis Helicobacter pylori strain: evolution during disease progression.</title>
        <authorList>
            <person name="Oh J.D."/>
            <person name="Kling-Baeckhed H."/>
            <person name="Giannakis M."/>
            <person name="Xu J."/>
            <person name="Fulton R.S."/>
            <person name="Fulton L.A."/>
            <person name="Cordum H.S."/>
            <person name="Wang C."/>
            <person name="Elliott G."/>
            <person name="Edwards J."/>
            <person name="Mardis E.R."/>
            <person name="Engstrand L.G."/>
            <person name="Gordon J.I."/>
        </authorList>
    </citation>
    <scope>NUCLEOTIDE SEQUENCE [LARGE SCALE GENOMIC DNA]</scope>
    <source>
        <strain>HPAG1</strain>
    </source>
</reference>
<protein>
    <recommendedName>
        <fullName evidence="1">Large ribosomal subunit protein bL31</fullName>
    </recommendedName>
    <alternativeName>
        <fullName evidence="2">50S ribosomal protein L31</fullName>
    </alternativeName>
</protein>
<gene>
    <name evidence="1" type="primary">rpmE</name>
    <name type="ordered locus">HPAG1_0529</name>
</gene>
<accession>Q1CTX6</accession>
<organism>
    <name type="scientific">Helicobacter pylori (strain HPAG1)</name>
    <dbReference type="NCBI Taxonomy" id="357544"/>
    <lineage>
        <taxon>Bacteria</taxon>
        <taxon>Pseudomonadati</taxon>
        <taxon>Campylobacterota</taxon>
        <taxon>Epsilonproteobacteria</taxon>
        <taxon>Campylobacterales</taxon>
        <taxon>Helicobacteraceae</taxon>
        <taxon>Helicobacter</taxon>
    </lineage>
</organism>
<keyword id="KW-0687">Ribonucleoprotein</keyword>
<keyword id="KW-0689">Ribosomal protein</keyword>
<keyword id="KW-0694">RNA-binding</keyword>
<keyword id="KW-0699">rRNA-binding</keyword>
<comment type="function">
    <text evidence="1">Binds the 23S rRNA.</text>
</comment>
<comment type="subunit">
    <text evidence="1">Part of the 50S ribosomal subunit.</text>
</comment>
<comment type="similarity">
    <text evidence="1">Belongs to the bacterial ribosomal protein bL31 family. Type A subfamily.</text>
</comment>
<sequence length="67" mass="7652">MKKGIHPEYIPCKVTCVTSGKEIEVLSTKPEMRIDISSFCHPFYTGSDKIADTAGRVEKFKQRYNLK</sequence>
<proteinExistence type="inferred from homology"/>
<feature type="chain" id="PRO_0000259192" description="Large ribosomal subunit protein bL31">
    <location>
        <begin position="1"/>
        <end position="67"/>
    </location>
</feature>